<name>RIMP_PHOV8</name>
<reference key="1">
    <citation type="journal article" date="2007" name="PLoS Biol.">
        <title>Evolution of symbiotic bacteria in the distal human intestine.</title>
        <authorList>
            <person name="Xu J."/>
            <person name="Mahowald M.A."/>
            <person name="Ley R.E."/>
            <person name="Lozupone C.A."/>
            <person name="Hamady M."/>
            <person name="Martens E.C."/>
            <person name="Henrissat B."/>
            <person name="Coutinho P.M."/>
            <person name="Minx P."/>
            <person name="Latreille P."/>
            <person name="Cordum H."/>
            <person name="Van Brunt A."/>
            <person name="Kim K."/>
            <person name="Fulton R.S."/>
            <person name="Fulton L.A."/>
            <person name="Clifton S.W."/>
            <person name="Wilson R.K."/>
            <person name="Knight R.D."/>
            <person name="Gordon J.I."/>
        </authorList>
    </citation>
    <scope>NUCLEOTIDE SEQUENCE [LARGE SCALE GENOMIC DNA]</scope>
    <source>
        <strain>ATCC 8482 / DSM 1447 / JCM 5826 / CCUG 4940 / NBRC 14291 / NCTC 11154</strain>
    </source>
</reference>
<evidence type="ECO:0000255" key="1">
    <source>
        <dbReference type="HAMAP-Rule" id="MF_01077"/>
    </source>
</evidence>
<protein>
    <recommendedName>
        <fullName evidence="1">Ribosome maturation factor RimP</fullName>
    </recommendedName>
</protein>
<sequence length="155" mass="17915">MIDKNVVTRIVDEWLEGKDYFLVDVTVSPDDKIVVEIDHAEGVWIDDCVELSRYIESKLDREEEDYELEVGSAGIGQPFKVLQQYLIHIGKEVEILTKEGKKLEGVLKDANEENFTVTIEKKVKPEGAKRPKLVEEDITFAYDEIKYTKYLISFK</sequence>
<organism>
    <name type="scientific">Phocaeicola vulgatus (strain ATCC 8482 / DSM 1447 / JCM 5826 / CCUG 4940 / NBRC 14291 / NCTC 11154)</name>
    <name type="common">Bacteroides vulgatus</name>
    <dbReference type="NCBI Taxonomy" id="435590"/>
    <lineage>
        <taxon>Bacteria</taxon>
        <taxon>Pseudomonadati</taxon>
        <taxon>Bacteroidota</taxon>
        <taxon>Bacteroidia</taxon>
        <taxon>Bacteroidales</taxon>
        <taxon>Bacteroidaceae</taxon>
        <taxon>Phocaeicola</taxon>
    </lineage>
</organism>
<keyword id="KW-0963">Cytoplasm</keyword>
<keyword id="KW-0690">Ribosome biogenesis</keyword>
<accession>A6L028</accession>
<feature type="chain" id="PRO_1000064683" description="Ribosome maturation factor RimP">
    <location>
        <begin position="1"/>
        <end position="155"/>
    </location>
</feature>
<proteinExistence type="inferred from homology"/>
<gene>
    <name evidence="1" type="primary">rimP</name>
    <name type="ordered locus">BVU_1353</name>
</gene>
<comment type="function">
    <text evidence="1">Required for maturation of 30S ribosomal subunits.</text>
</comment>
<comment type="subcellular location">
    <subcellularLocation>
        <location evidence="1">Cytoplasm</location>
    </subcellularLocation>
</comment>
<comment type="similarity">
    <text evidence="1">Belongs to the RimP family.</text>
</comment>
<dbReference type="EMBL" id="CP000139">
    <property type="protein sequence ID" value="ABR39042.1"/>
    <property type="molecule type" value="Genomic_DNA"/>
</dbReference>
<dbReference type="RefSeq" id="WP_005838850.1">
    <property type="nucleotide sequence ID" value="NZ_CAXVNH010000024.1"/>
</dbReference>
<dbReference type="SMR" id="A6L028"/>
<dbReference type="STRING" id="435590.BVU_1353"/>
<dbReference type="PaxDb" id="435590-BVU_1353"/>
<dbReference type="GeneID" id="93445228"/>
<dbReference type="KEGG" id="bvu:BVU_1353"/>
<dbReference type="eggNOG" id="COG0779">
    <property type="taxonomic scope" value="Bacteria"/>
</dbReference>
<dbReference type="HOGENOM" id="CLU_070525_3_1_10"/>
<dbReference type="BioCyc" id="BVUL435590:G1G59-1411-MONOMER"/>
<dbReference type="Proteomes" id="UP000002861">
    <property type="component" value="Chromosome"/>
</dbReference>
<dbReference type="GO" id="GO:0005829">
    <property type="term" value="C:cytosol"/>
    <property type="evidence" value="ECO:0007669"/>
    <property type="project" value="TreeGrafter"/>
</dbReference>
<dbReference type="GO" id="GO:0000028">
    <property type="term" value="P:ribosomal small subunit assembly"/>
    <property type="evidence" value="ECO:0007669"/>
    <property type="project" value="TreeGrafter"/>
</dbReference>
<dbReference type="GO" id="GO:0006412">
    <property type="term" value="P:translation"/>
    <property type="evidence" value="ECO:0007669"/>
    <property type="project" value="TreeGrafter"/>
</dbReference>
<dbReference type="Gene3D" id="3.30.300.70">
    <property type="entry name" value="RimP-like superfamily, N-terminal"/>
    <property type="match status" value="1"/>
</dbReference>
<dbReference type="HAMAP" id="MF_01077">
    <property type="entry name" value="RimP"/>
    <property type="match status" value="1"/>
</dbReference>
<dbReference type="InterPro" id="IPR003728">
    <property type="entry name" value="Ribosome_maturation_RimP"/>
</dbReference>
<dbReference type="InterPro" id="IPR028998">
    <property type="entry name" value="RimP_C"/>
</dbReference>
<dbReference type="InterPro" id="IPR028989">
    <property type="entry name" value="RimP_N"/>
</dbReference>
<dbReference type="InterPro" id="IPR035956">
    <property type="entry name" value="RimP_N_sf"/>
</dbReference>
<dbReference type="NCBIfam" id="NF002531">
    <property type="entry name" value="PRK02001.1"/>
    <property type="match status" value="1"/>
</dbReference>
<dbReference type="PANTHER" id="PTHR33867">
    <property type="entry name" value="RIBOSOME MATURATION FACTOR RIMP"/>
    <property type="match status" value="1"/>
</dbReference>
<dbReference type="PANTHER" id="PTHR33867:SF1">
    <property type="entry name" value="RIBOSOME MATURATION FACTOR RIMP"/>
    <property type="match status" value="1"/>
</dbReference>
<dbReference type="Pfam" id="PF17384">
    <property type="entry name" value="DUF150_C"/>
    <property type="match status" value="1"/>
</dbReference>
<dbReference type="Pfam" id="PF02576">
    <property type="entry name" value="RimP_N"/>
    <property type="match status" value="1"/>
</dbReference>
<dbReference type="SUPFAM" id="SSF75420">
    <property type="entry name" value="YhbC-like, N-terminal domain"/>
    <property type="match status" value="1"/>
</dbReference>